<gene>
    <name type="primary">Defa20</name>
    <name type="synonym">Defcr20</name>
</gene>
<accession>Q45VN2</accession>
<accession>Q8BH68</accession>
<name>DFA20_MOUSE</name>
<organism>
    <name type="scientific">Mus musculus</name>
    <name type="common">Mouse</name>
    <dbReference type="NCBI Taxonomy" id="10090"/>
    <lineage>
        <taxon>Eukaryota</taxon>
        <taxon>Metazoa</taxon>
        <taxon>Chordata</taxon>
        <taxon>Craniata</taxon>
        <taxon>Vertebrata</taxon>
        <taxon>Euteleostomi</taxon>
        <taxon>Mammalia</taxon>
        <taxon>Eutheria</taxon>
        <taxon>Euarchontoglires</taxon>
        <taxon>Glires</taxon>
        <taxon>Rodentia</taxon>
        <taxon>Myomorpha</taxon>
        <taxon>Muroidea</taxon>
        <taxon>Muridae</taxon>
        <taxon>Murinae</taxon>
        <taxon>Mus</taxon>
        <taxon>Mus</taxon>
    </lineage>
</organism>
<keyword id="KW-0044">Antibiotic</keyword>
<keyword id="KW-0929">Antimicrobial</keyword>
<keyword id="KW-0211">Defensin</keyword>
<keyword id="KW-1015">Disulfide bond</keyword>
<keyword id="KW-1185">Reference proteome</keyword>
<keyword id="KW-0964">Secreted</keyword>
<keyword id="KW-0732">Signal</keyword>
<evidence type="ECO:0000250" key="1"/>
<evidence type="ECO:0000255" key="2"/>
<evidence type="ECO:0000256" key="3">
    <source>
        <dbReference type="SAM" id="MobiDB-lite"/>
    </source>
</evidence>
<evidence type="ECO:0000305" key="4"/>
<reference key="1">
    <citation type="submission" date="2005-06" db="EMBL/GenBank/DDBJ databases">
        <authorList>
            <person name="Chen B."/>
            <person name="Zha Y."/>
            <person name="Xu X."/>
            <person name="Deng X."/>
        </authorList>
    </citation>
    <scope>NUCLEOTIDE SEQUENCE [MRNA]</scope>
    <source>
        <strain>Kunming</strain>
    </source>
</reference>
<reference key="2">
    <citation type="journal article" date="2005" name="Science">
        <title>The transcriptional landscape of the mammalian genome.</title>
        <authorList>
            <person name="Carninci P."/>
            <person name="Kasukawa T."/>
            <person name="Katayama S."/>
            <person name="Gough J."/>
            <person name="Frith M.C."/>
            <person name="Maeda N."/>
            <person name="Oyama R."/>
            <person name="Ravasi T."/>
            <person name="Lenhard B."/>
            <person name="Wells C."/>
            <person name="Kodzius R."/>
            <person name="Shimokawa K."/>
            <person name="Bajic V.B."/>
            <person name="Brenner S.E."/>
            <person name="Batalov S."/>
            <person name="Forrest A.R."/>
            <person name="Zavolan M."/>
            <person name="Davis M.J."/>
            <person name="Wilming L.G."/>
            <person name="Aidinis V."/>
            <person name="Allen J.E."/>
            <person name="Ambesi-Impiombato A."/>
            <person name="Apweiler R."/>
            <person name="Aturaliya R.N."/>
            <person name="Bailey T.L."/>
            <person name="Bansal M."/>
            <person name="Baxter L."/>
            <person name="Beisel K.W."/>
            <person name="Bersano T."/>
            <person name="Bono H."/>
            <person name="Chalk A.M."/>
            <person name="Chiu K.P."/>
            <person name="Choudhary V."/>
            <person name="Christoffels A."/>
            <person name="Clutterbuck D.R."/>
            <person name="Crowe M.L."/>
            <person name="Dalla E."/>
            <person name="Dalrymple B.P."/>
            <person name="de Bono B."/>
            <person name="Della Gatta G."/>
            <person name="di Bernardo D."/>
            <person name="Down T."/>
            <person name="Engstrom P."/>
            <person name="Fagiolini M."/>
            <person name="Faulkner G."/>
            <person name="Fletcher C.F."/>
            <person name="Fukushima T."/>
            <person name="Furuno M."/>
            <person name="Futaki S."/>
            <person name="Gariboldi M."/>
            <person name="Georgii-Hemming P."/>
            <person name="Gingeras T.R."/>
            <person name="Gojobori T."/>
            <person name="Green R.E."/>
            <person name="Gustincich S."/>
            <person name="Harbers M."/>
            <person name="Hayashi Y."/>
            <person name="Hensch T.K."/>
            <person name="Hirokawa N."/>
            <person name="Hill D."/>
            <person name="Huminiecki L."/>
            <person name="Iacono M."/>
            <person name="Ikeo K."/>
            <person name="Iwama A."/>
            <person name="Ishikawa T."/>
            <person name="Jakt M."/>
            <person name="Kanapin A."/>
            <person name="Katoh M."/>
            <person name="Kawasawa Y."/>
            <person name="Kelso J."/>
            <person name="Kitamura H."/>
            <person name="Kitano H."/>
            <person name="Kollias G."/>
            <person name="Krishnan S.P."/>
            <person name="Kruger A."/>
            <person name="Kummerfeld S.K."/>
            <person name="Kurochkin I.V."/>
            <person name="Lareau L.F."/>
            <person name="Lazarevic D."/>
            <person name="Lipovich L."/>
            <person name="Liu J."/>
            <person name="Liuni S."/>
            <person name="McWilliam S."/>
            <person name="Madan Babu M."/>
            <person name="Madera M."/>
            <person name="Marchionni L."/>
            <person name="Matsuda H."/>
            <person name="Matsuzawa S."/>
            <person name="Miki H."/>
            <person name="Mignone F."/>
            <person name="Miyake S."/>
            <person name="Morris K."/>
            <person name="Mottagui-Tabar S."/>
            <person name="Mulder N."/>
            <person name="Nakano N."/>
            <person name="Nakauchi H."/>
            <person name="Ng P."/>
            <person name="Nilsson R."/>
            <person name="Nishiguchi S."/>
            <person name="Nishikawa S."/>
            <person name="Nori F."/>
            <person name="Ohara O."/>
            <person name="Okazaki Y."/>
            <person name="Orlando V."/>
            <person name="Pang K.C."/>
            <person name="Pavan W.J."/>
            <person name="Pavesi G."/>
            <person name="Pesole G."/>
            <person name="Petrovsky N."/>
            <person name="Piazza S."/>
            <person name="Reed J."/>
            <person name="Reid J.F."/>
            <person name="Ring B.Z."/>
            <person name="Ringwald M."/>
            <person name="Rost B."/>
            <person name="Ruan Y."/>
            <person name="Salzberg S.L."/>
            <person name="Sandelin A."/>
            <person name="Schneider C."/>
            <person name="Schoenbach C."/>
            <person name="Sekiguchi K."/>
            <person name="Semple C.A."/>
            <person name="Seno S."/>
            <person name="Sessa L."/>
            <person name="Sheng Y."/>
            <person name="Shibata Y."/>
            <person name="Shimada H."/>
            <person name="Shimada K."/>
            <person name="Silva D."/>
            <person name="Sinclair B."/>
            <person name="Sperling S."/>
            <person name="Stupka E."/>
            <person name="Sugiura K."/>
            <person name="Sultana R."/>
            <person name="Takenaka Y."/>
            <person name="Taki K."/>
            <person name="Tammoja K."/>
            <person name="Tan S.L."/>
            <person name="Tang S."/>
            <person name="Taylor M.S."/>
            <person name="Tegner J."/>
            <person name="Teichmann S.A."/>
            <person name="Ueda H.R."/>
            <person name="van Nimwegen E."/>
            <person name="Verardo R."/>
            <person name="Wei C.L."/>
            <person name="Yagi K."/>
            <person name="Yamanishi H."/>
            <person name="Zabarovsky E."/>
            <person name="Zhu S."/>
            <person name="Zimmer A."/>
            <person name="Hide W."/>
            <person name="Bult C."/>
            <person name="Grimmond S.M."/>
            <person name="Teasdale R.D."/>
            <person name="Liu E.T."/>
            <person name="Brusic V."/>
            <person name="Quackenbush J."/>
            <person name="Wahlestedt C."/>
            <person name="Mattick J.S."/>
            <person name="Hume D.A."/>
            <person name="Kai C."/>
            <person name="Sasaki D."/>
            <person name="Tomaru Y."/>
            <person name="Fukuda S."/>
            <person name="Kanamori-Katayama M."/>
            <person name="Suzuki M."/>
            <person name="Aoki J."/>
            <person name="Arakawa T."/>
            <person name="Iida J."/>
            <person name="Imamura K."/>
            <person name="Itoh M."/>
            <person name="Kato T."/>
            <person name="Kawaji H."/>
            <person name="Kawagashira N."/>
            <person name="Kawashima T."/>
            <person name="Kojima M."/>
            <person name="Kondo S."/>
            <person name="Konno H."/>
            <person name="Nakano K."/>
            <person name="Ninomiya N."/>
            <person name="Nishio T."/>
            <person name="Okada M."/>
            <person name="Plessy C."/>
            <person name="Shibata K."/>
            <person name="Shiraki T."/>
            <person name="Suzuki S."/>
            <person name="Tagami M."/>
            <person name="Waki K."/>
            <person name="Watahiki A."/>
            <person name="Okamura-Oho Y."/>
            <person name="Suzuki H."/>
            <person name="Kawai J."/>
            <person name="Hayashizaki Y."/>
        </authorList>
    </citation>
    <scope>NUCLEOTIDE SEQUENCE [LARGE SCALE MRNA]</scope>
    <source>
        <strain>C57BL/6J</strain>
        <tissue>Small intestine</tissue>
    </source>
</reference>
<reference key="3">
    <citation type="journal article" date="2009" name="PLoS Biol.">
        <title>Lineage-specific biology revealed by a finished genome assembly of the mouse.</title>
        <authorList>
            <person name="Church D.M."/>
            <person name="Goodstadt L."/>
            <person name="Hillier L.W."/>
            <person name="Zody M.C."/>
            <person name="Goldstein S."/>
            <person name="She X."/>
            <person name="Bult C.J."/>
            <person name="Agarwala R."/>
            <person name="Cherry J.L."/>
            <person name="DiCuccio M."/>
            <person name="Hlavina W."/>
            <person name="Kapustin Y."/>
            <person name="Meric P."/>
            <person name="Maglott D."/>
            <person name="Birtle Z."/>
            <person name="Marques A.C."/>
            <person name="Graves T."/>
            <person name="Zhou S."/>
            <person name="Teague B."/>
            <person name="Potamousis K."/>
            <person name="Churas C."/>
            <person name="Place M."/>
            <person name="Herschleb J."/>
            <person name="Runnheim R."/>
            <person name="Forrest D."/>
            <person name="Amos-Landgraf J."/>
            <person name="Schwartz D.C."/>
            <person name="Cheng Z."/>
            <person name="Lindblad-Toh K."/>
            <person name="Eichler E.E."/>
            <person name="Ponting C.P."/>
        </authorList>
    </citation>
    <scope>NUCLEOTIDE SEQUENCE [LARGE SCALE GENOMIC DNA]</scope>
    <source>
        <strain>C57BL/6J</strain>
    </source>
</reference>
<protein>
    <recommendedName>
        <fullName>Alpha-defensin 20</fullName>
    </recommendedName>
    <alternativeName>
        <fullName>Cryptdin-4</fullName>
    </alternativeName>
    <alternativeName>
        <fullName>Defensin-related cryptdin-20</fullName>
    </alternativeName>
</protein>
<feature type="signal peptide" evidence="2">
    <location>
        <begin position="1"/>
        <end position="19"/>
    </location>
</feature>
<feature type="propeptide" id="PRO_0000300066" evidence="1">
    <location>
        <begin position="20"/>
        <end position="58"/>
    </location>
</feature>
<feature type="peptide" id="PRO_0000300067" description="Alpha-defensin 20">
    <location>
        <begin position="59"/>
        <end position="95"/>
    </location>
</feature>
<feature type="region of interest" description="Disordered" evidence="3">
    <location>
        <begin position="22"/>
        <end position="57"/>
    </location>
</feature>
<feature type="compositionally biased region" description="Acidic residues" evidence="3">
    <location>
        <begin position="25"/>
        <end position="40"/>
    </location>
</feature>
<feature type="disulfide bond" evidence="1">
    <location>
        <begin position="64"/>
        <end position="89"/>
    </location>
</feature>
<feature type="disulfide bond" evidence="1">
    <location>
        <begin position="66"/>
        <end position="81"/>
    </location>
</feature>
<feature type="disulfide bond" evidence="1">
    <location>
        <begin position="71"/>
        <end position="88"/>
    </location>
</feature>
<feature type="sequence conflict" description="In Ref. 1; AAZ17407." evidence="4" ref="1">
    <original>F</original>
    <variation>Y</variation>
    <location>
        <position position="87"/>
    </location>
</feature>
<feature type="sequence conflict" description="In Ref. 1; AAZ17407." evidence="4" ref="1">
    <original>RRRHRH</original>
    <variation>PRR</variation>
    <location>
        <begin position="90"/>
        <end position="95"/>
    </location>
</feature>
<sequence length="95" mass="10601">MKTLVLLSALVLLAFQVQADPIQNTDEETNTEEQPGEEDQAVSVSFGDPEGSALHEKSSRDLICYCRKGGCNRGEQVYGTCSGRLLFCCRRRHRH</sequence>
<proteinExistence type="inferred from homology"/>
<dbReference type="EMBL" id="DQ103703">
    <property type="protein sequence ID" value="AAZ17407.1"/>
    <property type="molecule type" value="mRNA"/>
</dbReference>
<dbReference type="EMBL" id="AK008107">
    <property type="protein sequence ID" value="BAC25200.1"/>
    <property type="molecule type" value="mRNA"/>
</dbReference>
<dbReference type="EMBL" id="AK008275">
    <property type="protein sequence ID" value="BAC25212.1"/>
    <property type="molecule type" value="mRNA"/>
</dbReference>
<dbReference type="EMBL" id="AC239604">
    <property type="status" value="NOT_ANNOTATED_CDS"/>
    <property type="molecule type" value="Genomic_DNA"/>
</dbReference>
<dbReference type="CCDS" id="CCDS40273.1"/>
<dbReference type="RefSeq" id="NP_001170992.1">
    <property type="nucleotide sequence ID" value="NM_001177521.1"/>
</dbReference>
<dbReference type="RefSeq" id="NP_899091.2">
    <property type="nucleotide sequence ID" value="NM_183268.4"/>
</dbReference>
<dbReference type="FunCoup" id="Q45VN2">
    <property type="interactions" value="46"/>
</dbReference>
<dbReference type="STRING" id="10090.ENSMUSP00000081054"/>
<dbReference type="PaxDb" id="10090-ENSMUSP00000081054"/>
<dbReference type="PeptideAtlas" id="Q45VN2"/>
<dbReference type="DNASU" id="68009"/>
<dbReference type="Ensembl" id="ENSMUST00000084041.4">
    <property type="protein sequence ID" value="ENSMUSP00000081054.4"/>
    <property type="gene ID" value="ENSMUSG00000094818.2"/>
</dbReference>
<dbReference type="Ensembl" id="ENSMUST00000084042.4">
    <property type="protein sequence ID" value="ENSMUSP00000081055.4"/>
    <property type="gene ID" value="ENSMUSG00000095066.2"/>
</dbReference>
<dbReference type="GeneID" id="100041890"/>
<dbReference type="GeneID" id="68009"/>
<dbReference type="KEGG" id="mmu:100041890"/>
<dbReference type="KEGG" id="mmu:68009"/>
<dbReference type="UCSC" id="uc009lbq.2">
    <property type="organism name" value="mouse"/>
</dbReference>
<dbReference type="AGR" id="MGI:1915259"/>
<dbReference type="CTD" id="100041890"/>
<dbReference type="CTD" id="68009"/>
<dbReference type="MGI" id="MGI:1915259">
    <property type="gene designation" value="Defa20"/>
</dbReference>
<dbReference type="VEuPathDB" id="HostDB:ENSMUSG00000094818"/>
<dbReference type="VEuPathDB" id="HostDB:ENSMUSG00000095066"/>
<dbReference type="GeneTree" id="ENSGT00940000153268"/>
<dbReference type="HOGENOM" id="CLU_160803_1_0_1"/>
<dbReference type="InParanoid" id="Q45VN2"/>
<dbReference type="OMA" id="RRVCRNT"/>
<dbReference type="PhylomeDB" id="Q45VN2"/>
<dbReference type="TreeFam" id="TF338414"/>
<dbReference type="Reactome" id="R-MMU-1461973">
    <property type="pathway name" value="Defensins"/>
</dbReference>
<dbReference type="Reactome" id="R-MMU-1462054">
    <property type="pathway name" value="Alpha-defensins"/>
</dbReference>
<dbReference type="Reactome" id="R-MMU-6798695">
    <property type="pathway name" value="Neutrophil degranulation"/>
</dbReference>
<dbReference type="BioGRID-ORCS" id="100041890">
    <property type="hits" value="1 hit in 28 CRISPR screens"/>
</dbReference>
<dbReference type="BioGRID-ORCS" id="68009">
    <property type="hits" value="1 hit in 34 CRISPR screens"/>
</dbReference>
<dbReference type="ChiTaRS" id="Defa20">
    <property type="organism name" value="mouse"/>
</dbReference>
<dbReference type="PRO" id="PR:Q45VN2"/>
<dbReference type="Proteomes" id="UP000000589">
    <property type="component" value="Chromosome 8"/>
</dbReference>
<dbReference type="RNAct" id="Q45VN2">
    <property type="molecule type" value="protein"/>
</dbReference>
<dbReference type="Bgee" id="ENSMUSG00000094818">
    <property type="expression patterns" value="Expressed in ileum and 17 other cell types or tissues"/>
</dbReference>
<dbReference type="GO" id="GO:0005615">
    <property type="term" value="C:extracellular space"/>
    <property type="evidence" value="ECO:0000314"/>
    <property type="project" value="MGI"/>
</dbReference>
<dbReference type="GO" id="GO:0019731">
    <property type="term" value="P:antibacterial humoral response"/>
    <property type="evidence" value="ECO:0000314"/>
    <property type="project" value="MGI"/>
</dbReference>
<dbReference type="GO" id="GO:0051873">
    <property type="term" value="P:killing by host of symbiont cells"/>
    <property type="evidence" value="ECO:0000314"/>
    <property type="project" value="CACAO"/>
</dbReference>
<dbReference type="InterPro" id="IPR016327">
    <property type="entry name" value="Alpha-defensin"/>
</dbReference>
<dbReference type="InterPro" id="IPR002366">
    <property type="entry name" value="Alpha-defensin_N"/>
</dbReference>
<dbReference type="InterPro" id="IPR006080">
    <property type="entry name" value="Beta/alpha-defensin_C"/>
</dbReference>
<dbReference type="PANTHER" id="PTHR11876">
    <property type="entry name" value="ALPHA-DEFENSIN 1"/>
    <property type="match status" value="1"/>
</dbReference>
<dbReference type="PANTHER" id="PTHR11876:SF2">
    <property type="entry name" value="ALPHA-DEFENSIN 1-RELATED"/>
    <property type="match status" value="1"/>
</dbReference>
<dbReference type="Pfam" id="PF00879">
    <property type="entry name" value="Defensin_propep"/>
    <property type="match status" value="1"/>
</dbReference>
<dbReference type="PIRSF" id="PIRSF001875">
    <property type="entry name" value="Alpha-defensin"/>
    <property type="match status" value="1"/>
</dbReference>
<dbReference type="SMART" id="SM01418">
    <property type="entry name" value="Defensin_propep"/>
    <property type="match status" value="1"/>
</dbReference>
<dbReference type="SMART" id="SM00048">
    <property type="entry name" value="DEFSN"/>
    <property type="match status" value="1"/>
</dbReference>
<dbReference type="SUPFAM" id="SSF57392">
    <property type="entry name" value="Defensin-like"/>
    <property type="match status" value="1"/>
</dbReference>
<comment type="function">
    <text evidence="1">May have microbicidal activities.</text>
</comment>
<comment type="subcellular location">
    <subcellularLocation>
        <location evidence="1">Secreted</location>
    </subcellularLocation>
</comment>
<comment type="similarity">
    <text evidence="4">Belongs to the alpha-defensin family.</text>
</comment>